<accession>B3H587</accession>
<accession>Q9C6B5</accession>
<accession>Q9FX47</accession>
<reference key="1">
    <citation type="journal article" date="2000" name="Nature">
        <title>Sequence and analysis of chromosome 1 of the plant Arabidopsis thaliana.</title>
        <authorList>
            <person name="Theologis A."/>
            <person name="Ecker J.R."/>
            <person name="Palm C.J."/>
            <person name="Federspiel N.A."/>
            <person name="Kaul S."/>
            <person name="White O."/>
            <person name="Alonso J."/>
            <person name="Altafi H."/>
            <person name="Araujo R."/>
            <person name="Bowman C.L."/>
            <person name="Brooks S.Y."/>
            <person name="Buehler E."/>
            <person name="Chan A."/>
            <person name="Chao Q."/>
            <person name="Chen H."/>
            <person name="Cheuk R.F."/>
            <person name="Chin C.W."/>
            <person name="Chung M.K."/>
            <person name="Conn L."/>
            <person name="Conway A.B."/>
            <person name="Conway A.R."/>
            <person name="Creasy T.H."/>
            <person name="Dewar K."/>
            <person name="Dunn P."/>
            <person name="Etgu P."/>
            <person name="Feldblyum T.V."/>
            <person name="Feng J.-D."/>
            <person name="Fong B."/>
            <person name="Fujii C.Y."/>
            <person name="Gill J.E."/>
            <person name="Goldsmith A.D."/>
            <person name="Haas B."/>
            <person name="Hansen N.F."/>
            <person name="Hughes B."/>
            <person name="Huizar L."/>
            <person name="Hunter J.L."/>
            <person name="Jenkins J."/>
            <person name="Johnson-Hopson C."/>
            <person name="Khan S."/>
            <person name="Khaykin E."/>
            <person name="Kim C.J."/>
            <person name="Koo H.L."/>
            <person name="Kremenetskaia I."/>
            <person name="Kurtz D.B."/>
            <person name="Kwan A."/>
            <person name="Lam B."/>
            <person name="Langin-Hooper S."/>
            <person name="Lee A."/>
            <person name="Lee J.M."/>
            <person name="Lenz C.A."/>
            <person name="Li J.H."/>
            <person name="Li Y.-P."/>
            <person name="Lin X."/>
            <person name="Liu S.X."/>
            <person name="Liu Z.A."/>
            <person name="Luros J.S."/>
            <person name="Maiti R."/>
            <person name="Marziali A."/>
            <person name="Militscher J."/>
            <person name="Miranda M."/>
            <person name="Nguyen M."/>
            <person name="Nierman W.C."/>
            <person name="Osborne B.I."/>
            <person name="Pai G."/>
            <person name="Peterson J."/>
            <person name="Pham P.K."/>
            <person name="Rizzo M."/>
            <person name="Rooney T."/>
            <person name="Rowley D."/>
            <person name="Sakano H."/>
            <person name="Salzberg S.L."/>
            <person name="Schwartz J.R."/>
            <person name="Shinn P."/>
            <person name="Southwick A.M."/>
            <person name="Sun H."/>
            <person name="Tallon L.J."/>
            <person name="Tambunga G."/>
            <person name="Toriumi M.J."/>
            <person name="Town C.D."/>
            <person name="Utterback T."/>
            <person name="Van Aken S."/>
            <person name="Vaysberg M."/>
            <person name="Vysotskaia V.S."/>
            <person name="Walker M."/>
            <person name="Wu D."/>
            <person name="Yu G."/>
            <person name="Fraser C.M."/>
            <person name="Venter J.C."/>
            <person name="Davis R.W."/>
        </authorList>
    </citation>
    <scope>NUCLEOTIDE SEQUENCE [LARGE SCALE GENOMIC DNA]</scope>
    <source>
        <strain>cv. Columbia</strain>
    </source>
</reference>
<reference key="2">
    <citation type="journal article" date="2017" name="Plant J.">
        <title>Araport11: a complete reannotation of the Arabidopsis thaliana reference genome.</title>
        <authorList>
            <person name="Cheng C.Y."/>
            <person name="Krishnakumar V."/>
            <person name="Chan A.P."/>
            <person name="Thibaud-Nissen F."/>
            <person name="Schobel S."/>
            <person name="Town C.D."/>
        </authorList>
    </citation>
    <scope>GENOME REANNOTATION</scope>
    <source>
        <strain>cv. Columbia</strain>
    </source>
</reference>
<reference key="3">
    <citation type="submission" date="2007-01" db="EMBL/GenBank/DDBJ databases">
        <title>Arabidopsis ORF clones.</title>
        <authorList>
            <person name="Kim C.J."/>
            <person name="Bautista V.R."/>
            <person name="Chen H."/>
            <person name="De Los Reyes C."/>
            <person name="Wu S.Y."/>
            <person name="Ecker J.R."/>
        </authorList>
    </citation>
    <scope>NUCLEOTIDE SEQUENCE [LARGE SCALE MRNA]</scope>
    <source>
        <strain>cv. Columbia</strain>
    </source>
</reference>
<reference key="4">
    <citation type="journal article" date="2013" name="Plant Mol. Biol.">
        <title>Coexpression patterns indicate that GPI-anchored non-specific lipid transfer proteins are involved in accumulation of cuticular wax, suberin and sporopollenin.</title>
        <authorList>
            <person name="Edstam M.M."/>
            <person name="Blomqvist K."/>
            <person name="Ekloef A."/>
            <person name="Wennergren U."/>
            <person name="Edqvist J."/>
        </authorList>
    </citation>
    <scope>GENE FAMILY</scope>
    <scope>NOMENCLATURE</scope>
    <source>
        <strain>cv. Columbia</strain>
    </source>
</reference>
<comment type="function">
    <text evidence="2">Probable lipid transfer protein.</text>
</comment>
<comment type="subcellular location">
    <subcellularLocation>
        <location evidence="3">Cell membrane</location>
        <topology evidence="3">Lipid-anchor</topology>
        <topology evidence="3">GPI-anchor</topology>
    </subcellularLocation>
</comment>
<comment type="alternative products">
    <event type="alternative splicing"/>
    <isoform>
        <id>B3H587-1</id>
        <name>1</name>
        <sequence type="displayed"/>
    </isoform>
    <isoform>
        <id>B3H587-2</id>
        <name>2</name>
        <sequence type="described" ref="VSP_060822 VSP_060823"/>
    </isoform>
</comment>
<comment type="similarity">
    <text evidence="6">Belongs to the plant LTP family.</text>
</comment>
<comment type="sequence caution" evidence="6">
    <conflict type="erroneous gene model prediction">
        <sequence resource="EMBL-CDS" id="AAG51811"/>
    </conflict>
</comment>
<proteinExistence type="evidence at transcript level"/>
<organism>
    <name type="scientific">Arabidopsis thaliana</name>
    <name type="common">Mouse-ear cress</name>
    <dbReference type="NCBI Taxonomy" id="3702"/>
    <lineage>
        <taxon>Eukaryota</taxon>
        <taxon>Viridiplantae</taxon>
        <taxon>Streptophyta</taxon>
        <taxon>Embryophyta</taxon>
        <taxon>Tracheophyta</taxon>
        <taxon>Spermatophyta</taxon>
        <taxon>Magnoliopsida</taxon>
        <taxon>eudicotyledons</taxon>
        <taxon>Gunneridae</taxon>
        <taxon>Pentapetalae</taxon>
        <taxon>rosids</taxon>
        <taxon>malvids</taxon>
        <taxon>Brassicales</taxon>
        <taxon>Brassicaceae</taxon>
        <taxon>Camelineae</taxon>
        <taxon>Arabidopsis</taxon>
    </lineage>
</organism>
<feature type="signal peptide" evidence="3">
    <location>
        <begin position="1"/>
        <end position="23"/>
    </location>
</feature>
<feature type="chain" id="PRO_5002788141" description="Non-specific lipid transfer protein GPI-anchored 8">
    <location>
        <begin position="24"/>
        <end position="124"/>
    </location>
</feature>
<feature type="propeptide" id="PRO_0000451642" description="Removed in mature form" evidence="3">
    <location>
        <begin position="125"/>
        <end position="152"/>
    </location>
</feature>
<feature type="lipid moiety-binding region" description="GPI-anchor amidated serine" evidence="3">
    <location>
        <position position="124"/>
    </location>
</feature>
<feature type="glycosylation site" description="N-linked (GlcNAc...) asparagine" evidence="4">
    <location>
        <position position="108"/>
    </location>
</feature>
<feature type="disulfide bond" evidence="1">
    <location>
        <begin position="42"/>
        <end position="56"/>
    </location>
</feature>
<feature type="disulfide bond" evidence="1">
    <location>
        <begin position="57"/>
        <end position="98"/>
    </location>
</feature>
<feature type="disulfide bond" evidence="1">
    <location>
        <begin position="70"/>
        <end position="107"/>
    </location>
</feature>
<feature type="splice variant" id="VSP_060822" description="In isoform 2.">
    <original>NSFSTKKNT</original>
    <variation>MHLPTPYQN</variation>
    <location>
        <begin position="126"/>
        <end position="134"/>
    </location>
</feature>
<feature type="splice variant" id="VSP_060823" description="In isoform 2.">
    <location>
        <begin position="135"/>
        <end position="152"/>
    </location>
</feature>
<name>LTPG8_ARATH</name>
<gene>
    <name evidence="5" type="primary">LTPG8</name>
    <name evidence="9" type="ordered locus">At1g73550</name>
    <name evidence="8" type="ORF">F6D5.6</name>
    <name evidence="7" type="ORF">T9L24.29</name>
</gene>
<protein>
    <recommendedName>
        <fullName evidence="5">Non-specific lipid transfer protein GPI-anchored 8</fullName>
        <shortName evidence="5">AtLTPG-8</shortName>
        <shortName evidence="5">Protein LTP-GPI-ANCHORED 8</shortName>
    </recommendedName>
</protein>
<keyword id="KW-0025">Alternative splicing</keyword>
<keyword id="KW-1003">Cell membrane</keyword>
<keyword id="KW-1015">Disulfide bond</keyword>
<keyword id="KW-0325">Glycoprotein</keyword>
<keyword id="KW-0336">GPI-anchor</keyword>
<keyword id="KW-0449">Lipoprotein</keyword>
<keyword id="KW-0472">Membrane</keyword>
<keyword id="KW-1185">Reference proteome</keyword>
<keyword id="KW-0732">Signal</keyword>
<dbReference type="EMBL" id="AC012396">
    <property type="protein sequence ID" value="AAG30973.1"/>
    <property type="molecule type" value="Genomic_DNA"/>
</dbReference>
<dbReference type="EMBL" id="AC079676">
    <property type="protein sequence ID" value="AAG51811.1"/>
    <property type="status" value="ALT_SEQ"/>
    <property type="molecule type" value="Genomic_DNA"/>
</dbReference>
<dbReference type="EMBL" id="CP002684">
    <property type="protein sequence ID" value="AEE35474.1"/>
    <property type="molecule type" value="Genomic_DNA"/>
</dbReference>
<dbReference type="EMBL" id="CP002684">
    <property type="protein sequence ID" value="AEE35475.1"/>
    <property type="molecule type" value="Genomic_DNA"/>
</dbReference>
<dbReference type="EMBL" id="BT030072">
    <property type="protein sequence ID" value="ABN04810.1"/>
    <property type="molecule type" value="mRNA"/>
</dbReference>
<dbReference type="PIR" id="C96762">
    <property type="entry name" value="C96762"/>
</dbReference>
<dbReference type="RefSeq" id="NP_001117596.1">
    <molecule id="B3H587-2"/>
    <property type="nucleotide sequence ID" value="NM_001124124.2"/>
</dbReference>
<dbReference type="RefSeq" id="NP_177496.3">
    <molecule id="B3H587-1"/>
    <property type="nucleotide sequence ID" value="NM_106013.5"/>
</dbReference>
<dbReference type="GlyCosmos" id="B3H587">
    <property type="glycosylation" value="1 site, No reported glycans"/>
</dbReference>
<dbReference type="GlyGen" id="B3H587">
    <property type="glycosylation" value="1 site"/>
</dbReference>
<dbReference type="iPTMnet" id="B3H587"/>
<dbReference type="PaxDb" id="3702-AT1G73550.1"/>
<dbReference type="EnsemblPlants" id="AT1G73550.1">
    <molecule id="B3H587-1"/>
    <property type="protein sequence ID" value="AT1G73550.1"/>
    <property type="gene ID" value="AT1G73550"/>
</dbReference>
<dbReference type="EnsemblPlants" id="AT1G73550.2">
    <molecule id="B3H587-2"/>
    <property type="protein sequence ID" value="AT1G73550.2"/>
    <property type="gene ID" value="AT1G73550"/>
</dbReference>
<dbReference type="GeneID" id="843689"/>
<dbReference type="Gramene" id="AT1G73550.1">
    <molecule id="B3H587-1"/>
    <property type="protein sequence ID" value="AT1G73550.1"/>
    <property type="gene ID" value="AT1G73550"/>
</dbReference>
<dbReference type="Gramene" id="AT1G73550.2">
    <molecule id="B3H587-2"/>
    <property type="protein sequence ID" value="AT1G73550.2"/>
    <property type="gene ID" value="AT1G73550"/>
</dbReference>
<dbReference type="KEGG" id="ath:AT1G73550"/>
<dbReference type="Araport" id="AT1G73550"/>
<dbReference type="TAIR" id="AT1G73550">
    <property type="gene designation" value="LTPG8"/>
</dbReference>
<dbReference type="HOGENOM" id="CLU_116928_3_1_1"/>
<dbReference type="InParanoid" id="B3H587"/>
<dbReference type="OMA" id="PYIHSEL"/>
<dbReference type="PhylomeDB" id="B3H587"/>
<dbReference type="PRO" id="PR:B3H587"/>
<dbReference type="Proteomes" id="UP000006548">
    <property type="component" value="Chromosome 1"/>
</dbReference>
<dbReference type="ExpressionAtlas" id="B3H587">
    <property type="expression patterns" value="baseline and differential"/>
</dbReference>
<dbReference type="GO" id="GO:0005886">
    <property type="term" value="C:plasma membrane"/>
    <property type="evidence" value="ECO:0007669"/>
    <property type="project" value="UniProtKB-SubCell"/>
</dbReference>
<dbReference type="GO" id="GO:0098552">
    <property type="term" value="C:side of membrane"/>
    <property type="evidence" value="ECO:0007669"/>
    <property type="project" value="UniProtKB-KW"/>
</dbReference>
<dbReference type="CDD" id="cd00010">
    <property type="entry name" value="AAI_LTSS"/>
    <property type="match status" value="1"/>
</dbReference>
<dbReference type="Gene3D" id="1.10.110.10">
    <property type="entry name" value="Plant lipid-transfer and hydrophobic proteins"/>
    <property type="match status" value="1"/>
</dbReference>
<dbReference type="InterPro" id="IPR036312">
    <property type="entry name" value="Bifun_inhib/LTP/seed_sf"/>
</dbReference>
<dbReference type="InterPro" id="IPR016140">
    <property type="entry name" value="Bifunc_inhib/LTP/seed_store"/>
</dbReference>
<dbReference type="InterPro" id="IPR043325">
    <property type="entry name" value="LTSS"/>
</dbReference>
<dbReference type="PANTHER" id="PTHR33044">
    <property type="entry name" value="BIFUNCTIONAL INHIBITOR/LIPID-TRANSFER PROTEIN/SEED STORAGE 2S ALBUMIN SUPERFAMILY PROTEIN-RELATED"/>
    <property type="match status" value="1"/>
</dbReference>
<dbReference type="Pfam" id="PF14368">
    <property type="entry name" value="LTP_2"/>
    <property type="match status" value="1"/>
</dbReference>
<dbReference type="SMART" id="SM00499">
    <property type="entry name" value="AAI"/>
    <property type="match status" value="1"/>
</dbReference>
<dbReference type="SUPFAM" id="SSF47699">
    <property type="entry name" value="Bifunctional inhibitor/lipid-transfer protein/seed storage 2S albumin"/>
    <property type="match status" value="1"/>
</dbReference>
<sequence length="152" mass="16510">MNITRILGVVTTVVILYSVQVTAQFFGDVQQAMRCVAKLMPCQPYIHLSIPPPPLCCNPMKQIAEKDVSCLCTAFKHPDLLRFLALTKENAIKILDSCGINHDPSVCNKTNPSSPAALPEAATSGNSFSTKKNTALAITFFGFSFVFLGMII</sequence>
<evidence type="ECO:0000250" key="1">
    <source>
        <dbReference type="UniProtKB" id="A0A0B4JDK1"/>
    </source>
</evidence>
<evidence type="ECO:0000250" key="2">
    <source>
        <dbReference type="UniProtKB" id="Q9C7F7"/>
    </source>
</evidence>
<evidence type="ECO:0000255" key="3"/>
<evidence type="ECO:0000255" key="4">
    <source>
        <dbReference type="PROSITE-ProRule" id="PRU00498"/>
    </source>
</evidence>
<evidence type="ECO:0000303" key="5">
    <source>
    </source>
</evidence>
<evidence type="ECO:0000305" key="6"/>
<evidence type="ECO:0000312" key="7">
    <source>
        <dbReference type="EMBL" id="AAG30973.1"/>
    </source>
</evidence>
<evidence type="ECO:0000312" key="8">
    <source>
        <dbReference type="EMBL" id="AAG51811.1"/>
    </source>
</evidence>
<evidence type="ECO:0000312" key="9">
    <source>
        <dbReference type="EMBL" id="AEE35474.1"/>
    </source>
</evidence>